<protein>
    <recommendedName>
        <fullName evidence="10">Neuropeptide CCHamide-1 receptor</fullName>
    </recommendedName>
</protein>
<comment type="function">
    <text evidence="4 5 6 8 9">Receptor for the neuropeptide CCHamide-1 (PubMed:21110953, PubMed:23293632). Plays a role in the modulation of starvation-induced olfactory behavior where starved flies show increased responsiveness to food odorants, repellants and pheromones (PubMed:24067446). Contributes to regulation of sleep latency (the time required to fall asleep), amount of sleep and depth of sleep (arousability) (PubMed:30246807, PubMed:36958331). Involved in modulation of PDP1 and PDF levels in s-LNv (small ventral lateral neurons) clock neurons in response to CCHa1 released by DN1a (anterior dorsal neurons 1) clock neurons, to regulate morning activity (PubMed:30246807). In a subset of dopaminergic cells in the protocerebral anterior medial (PAM) cluster involved in suppressing arousability in response to CCHa1 secreted by gut enteroendocrine cells (PubMed:36958331).</text>
</comment>
<comment type="subcellular location">
    <subcellularLocation>
        <location evidence="11">Cell membrane</location>
        <topology evidence="1">Multi-pass membrane protein</topology>
    </subcellularLocation>
</comment>
<comment type="tissue specificity">
    <text evidence="7 8">Low levels in larval brain and gut with higher levels in adult brain and gut (PubMed:24098432). In the brain expression is widely distributed, including strong expression in the mushroom bodies (PubMed:30246807). Expressed weakly in s-LNv (small ventral lateral neurons) and strongly in l-LNv (large ventral lateral neurons), but not in other clock neurons (PubMed:30246807).</text>
</comment>
<comment type="developmental stage">
    <text evidence="7">Very low expression in eggs. Expression increases during the first and second instar larval stages, decreases in the third instar larval stage and increases again in pupae and adults.</text>
</comment>
<comment type="disruption phenotype">
    <text evidence="9">RNAi-mediated knockdown results in enhanced sensory responsiveness, or arousability, while awake, characterized by increased locomotion in response to vibrations (PubMed:36958331). During sleep results in hyper-arousability with fragmented sleep patterns characterized by slight decrease in duration and increase in frequency of sleep bouts (PubMed:36958331). Targeted RNAi-mediated knockdown in PAM dopaminergic neurons leads to increased arousability during sleep but not while awake (PubMed:36958331).</text>
</comment>
<comment type="similarity">
    <text evidence="3">Belongs to the G-protein coupled receptor 1 family.</text>
</comment>
<sequence length="499" mass="55549">MIANLVSMETDLAMNIGLDTSGEAPTALPPMPNVTETLWDLAMVVSQSTQWPLLDTGSSENFSELVTTETPYVPYGRRPETYIVPILFALIFVVGVLGNGTLIVVFLSVRQMRNVPNTYILSLALADLLVIITTVPLASTVYTVEYWPYGSFLCSLSEFMKDVSIGVSVFTLTALSGDRYFAIVDPLRKFHAHGGGRRATRMTLATAVSIWLLAILCGLPALIGSNLKHLGINEKSIVICYPYPEEWGINYAKSMVLLHFLVYYAIPLVVIAVFYVLIALHLMYSASVPGEIQGAVRQVRARRKVAVTVLAFVVIFGICFLPYHVFFLWFYFWPTAQDDYNAFWHVLRIVAYCMSFANSCANPVALYFVSGAFRKHFNRYLFCRGASGRRKKRGQHDTFCMHRDTSLTSTASKRFQSRHSCYQSTIRSCRLQETTITTLPNGGNQNGANISAVELALPVLQAPGHNEAHAPPSYGFLPLNEIVQQTRSSPAKFQESLLN</sequence>
<evidence type="ECO:0000255" key="1"/>
<evidence type="ECO:0000255" key="2">
    <source>
        <dbReference type="PROSITE-ProRule" id="PRU00498"/>
    </source>
</evidence>
<evidence type="ECO:0000255" key="3">
    <source>
        <dbReference type="PROSITE-ProRule" id="PRU00521"/>
    </source>
</evidence>
<evidence type="ECO:0000269" key="4">
    <source>
    </source>
</evidence>
<evidence type="ECO:0000269" key="5">
    <source>
    </source>
</evidence>
<evidence type="ECO:0000269" key="6">
    <source>
    </source>
</evidence>
<evidence type="ECO:0000269" key="7">
    <source>
    </source>
</evidence>
<evidence type="ECO:0000269" key="8">
    <source>
    </source>
</evidence>
<evidence type="ECO:0000269" key="9">
    <source>
    </source>
</evidence>
<evidence type="ECO:0000303" key="10">
    <source>
    </source>
</evidence>
<evidence type="ECO:0000305" key="11"/>
<evidence type="ECO:0000312" key="12">
    <source>
        <dbReference type="EMBL" id="AAX58700.1"/>
    </source>
</evidence>
<evidence type="ECO:0000312" key="13">
    <source>
        <dbReference type="FlyBase" id="FBgn0050106"/>
    </source>
</evidence>
<evidence type="ECO:0000312" key="14">
    <source>
        <dbReference type="Proteomes" id="UP000000803"/>
    </source>
</evidence>
<name>CCH1R_DROME</name>
<feature type="chain" id="PRO_0000435023" description="Neuropeptide CCHamide-1 receptor" evidence="11">
    <location>
        <begin position="1"/>
        <end position="499"/>
    </location>
</feature>
<feature type="topological domain" description="Extracellular" evidence="1">
    <location>
        <begin position="1"/>
        <end position="85"/>
    </location>
</feature>
<feature type="transmembrane region" description="Helical; Name=1" evidence="1">
    <location>
        <begin position="86"/>
        <end position="106"/>
    </location>
</feature>
<feature type="topological domain" description="Cytoplasmic" evidence="1">
    <location>
        <begin position="107"/>
        <end position="117"/>
    </location>
</feature>
<feature type="transmembrane region" description="Helical; Name=2" evidence="1">
    <location>
        <begin position="118"/>
        <end position="138"/>
    </location>
</feature>
<feature type="topological domain" description="Extracellular" evidence="1">
    <location>
        <begin position="139"/>
        <end position="162"/>
    </location>
</feature>
<feature type="transmembrane region" description="Helical; Name=3" evidence="1">
    <location>
        <begin position="163"/>
        <end position="183"/>
    </location>
</feature>
<feature type="topological domain" description="Cytoplasmic" evidence="1">
    <location>
        <begin position="184"/>
        <end position="203"/>
    </location>
</feature>
<feature type="transmembrane region" description="Helical; Name=4" evidence="1">
    <location>
        <begin position="204"/>
        <end position="224"/>
    </location>
</feature>
<feature type="topological domain" description="Extracellular" evidence="1">
    <location>
        <begin position="225"/>
        <end position="259"/>
    </location>
</feature>
<feature type="transmembrane region" description="Helical; Name=5" evidence="1">
    <location>
        <begin position="260"/>
        <end position="280"/>
    </location>
</feature>
<feature type="topological domain" description="Cytoplasmic" evidence="1">
    <location>
        <begin position="281"/>
        <end position="309"/>
    </location>
</feature>
<feature type="transmembrane region" description="Helical; Name=6" evidence="1">
    <location>
        <begin position="310"/>
        <end position="330"/>
    </location>
</feature>
<feature type="topological domain" description="Extracellular" evidence="1">
    <location>
        <begin position="331"/>
        <end position="348"/>
    </location>
</feature>
<feature type="transmembrane region" description="Helical; Name=7" evidence="1">
    <location>
        <begin position="349"/>
        <end position="369"/>
    </location>
</feature>
<feature type="topological domain" description="Cytoplasmic" evidence="1">
    <location>
        <begin position="370"/>
        <end position="499"/>
    </location>
</feature>
<feature type="glycosylation site" description="N-linked (GlcNAc...) asparagine" evidence="2">
    <location>
        <position position="33"/>
    </location>
</feature>
<feature type="glycosylation site" description="N-linked (GlcNAc...) asparagine" evidence="2">
    <location>
        <position position="61"/>
    </location>
</feature>
<feature type="disulfide bond" evidence="3">
    <location>
        <begin position="154"/>
        <end position="240"/>
    </location>
</feature>
<organism evidence="14">
    <name type="scientific">Drosophila melanogaster</name>
    <name type="common">Fruit fly</name>
    <dbReference type="NCBI Taxonomy" id="7227"/>
    <lineage>
        <taxon>Eukaryota</taxon>
        <taxon>Metazoa</taxon>
        <taxon>Ecdysozoa</taxon>
        <taxon>Arthropoda</taxon>
        <taxon>Hexapoda</taxon>
        <taxon>Insecta</taxon>
        <taxon>Pterygota</taxon>
        <taxon>Neoptera</taxon>
        <taxon>Endopterygota</taxon>
        <taxon>Diptera</taxon>
        <taxon>Brachycera</taxon>
        <taxon>Muscomorpha</taxon>
        <taxon>Ephydroidea</taxon>
        <taxon>Drosophilidae</taxon>
        <taxon>Drosophila</taxon>
        <taxon>Sophophora</taxon>
    </lineage>
</organism>
<accession>A1ZAX0</accession>
<keyword id="KW-1003">Cell membrane</keyword>
<keyword id="KW-1015">Disulfide bond</keyword>
<keyword id="KW-0297">G-protein coupled receptor</keyword>
<keyword id="KW-0325">Glycoprotein</keyword>
<keyword id="KW-0472">Membrane</keyword>
<keyword id="KW-0675">Receptor</keyword>
<keyword id="KW-1185">Reference proteome</keyword>
<keyword id="KW-0807">Transducer</keyword>
<keyword id="KW-0812">Transmembrane</keyword>
<keyword id="KW-1133">Transmembrane helix</keyword>
<proteinExistence type="evidence at transcript level"/>
<reference evidence="12" key="1">
    <citation type="journal article" date="2011" name="Biochem. Biophys. Res. Commun.">
        <title>The Drosophila genes CG14593 and CG30106 code for G-protein-coupled receptors specifically activated by the neuropeptides CCHamide-1 and CCHamide-2.</title>
        <authorList>
            <person name="Hansen K.K."/>
            <person name="Hauser F."/>
            <person name="Williamson M."/>
            <person name="Weber S.B."/>
            <person name="Grimmelikhuijzen C.J."/>
        </authorList>
    </citation>
    <scope>NUCLEOTIDE SEQUENCE [MRNA]</scope>
    <scope>FUNCTION</scope>
</reference>
<reference evidence="14" key="2">
    <citation type="journal article" date="2000" name="Science">
        <title>The genome sequence of Drosophila melanogaster.</title>
        <authorList>
            <person name="Adams M.D."/>
            <person name="Celniker S.E."/>
            <person name="Holt R.A."/>
            <person name="Evans C.A."/>
            <person name="Gocayne J.D."/>
            <person name="Amanatides P.G."/>
            <person name="Scherer S.E."/>
            <person name="Li P.W."/>
            <person name="Hoskins R.A."/>
            <person name="Galle R.F."/>
            <person name="George R.A."/>
            <person name="Lewis S.E."/>
            <person name="Richards S."/>
            <person name="Ashburner M."/>
            <person name="Henderson S.N."/>
            <person name="Sutton G.G."/>
            <person name="Wortman J.R."/>
            <person name="Yandell M.D."/>
            <person name="Zhang Q."/>
            <person name="Chen L.X."/>
            <person name="Brandon R.C."/>
            <person name="Rogers Y.-H.C."/>
            <person name="Blazej R.G."/>
            <person name="Champe M."/>
            <person name="Pfeiffer B.D."/>
            <person name="Wan K.H."/>
            <person name="Doyle C."/>
            <person name="Baxter E.G."/>
            <person name="Helt G."/>
            <person name="Nelson C.R."/>
            <person name="Miklos G.L.G."/>
            <person name="Abril J.F."/>
            <person name="Agbayani A."/>
            <person name="An H.-J."/>
            <person name="Andrews-Pfannkoch C."/>
            <person name="Baldwin D."/>
            <person name="Ballew R.M."/>
            <person name="Basu A."/>
            <person name="Baxendale J."/>
            <person name="Bayraktaroglu L."/>
            <person name="Beasley E.M."/>
            <person name="Beeson K.Y."/>
            <person name="Benos P.V."/>
            <person name="Berman B.P."/>
            <person name="Bhandari D."/>
            <person name="Bolshakov S."/>
            <person name="Borkova D."/>
            <person name="Botchan M.R."/>
            <person name="Bouck J."/>
            <person name="Brokstein P."/>
            <person name="Brottier P."/>
            <person name="Burtis K.C."/>
            <person name="Busam D.A."/>
            <person name="Butler H."/>
            <person name="Cadieu E."/>
            <person name="Center A."/>
            <person name="Chandra I."/>
            <person name="Cherry J.M."/>
            <person name="Cawley S."/>
            <person name="Dahlke C."/>
            <person name="Davenport L.B."/>
            <person name="Davies P."/>
            <person name="de Pablos B."/>
            <person name="Delcher A."/>
            <person name="Deng Z."/>
            <person name="Mays A.D."/>
            <person name="Dew I."/>
            <person name="Dietz S.M."/>
            <person name="Dodson K."/>
            <person name="Doup L.E."/>
            <person name="Downes M."/>
            <person name="Dugan-Rocha S."/>
            <person name="Dunkov B.C."/>
            <person name="Dunn P."/>
            <person name="Durbin K.J."/>
            <person name="Evangelista C.C."/>
            <person name="Ferraz C."/>
            <person name="Ferriera S."/>
            <person name="Fleischmann W."/>
            <person name="Fosler C."/>
            <person name="Gabrielian A.E."/>
            <person name="Garg N.S."/>
            <person name="Gelbart W.M."/>
            <person name="Glasser K."/>
            <person name="Glodek A."/>
            <person name="Gong F."/>
            <person name="Gorrell J.H."/>
            <person name="Gu Z."/>
            <person name="Guan P."/>
            <person name="Harris M."/>
            <person name="Harris N.L."/>
            <person name="Harvey D.A."/>
            <person name="Heiman T.J."/>
            <person name="Hernandez J.R."/>
            <person name="Houck J."/>
            <person name="Hostin D."/>
            <person name="Houston K.A."/>
            <person name="Howland T.J."/>
            <person name="Wei M.-H."/>
            <person name="Ibegwam C."/>
            <person name="Jalali M."/>
            <person name="Kalush F."/>
            <person name="Karpen G.H."/>
            <person name="Ke Z."/>
            <person name="Kennison J.A."/>
            <person name="Ketchum K.A."/>
            <person name="Kimmel B.E."/>
            <person name="Kodira C.D."/>
            <person name="Kraft C.L."/>
            <person name="Kravitz S."/>
            <person name="Kulp D."/>
            <person name="Lai Z."/>
            <person name="Lasko P."/>
            <person name="Lei Y."/>
            <person name="Levitsky A.A."/>
            <person name="Li J.H."/>
            <person name="Li Z."/>
            <person name="Liang Y."/>
            <person name="Lin X."/>
            <person name="Liu X."/>
            <person name="Mattei B."/>
            <person name="McIntosh T.C."/>
            <person name="McLeod M.P."/>
            <person name="McPherson D."/>
            <person name="Merkulov G."/>
            <person name="Milshina N.V."/>
            <person name="Mobarry C."/>
            <person name="Morris J."/>
            <person name="Moshrefi A."/>
            <person name="Mount S.M."/>
            <person name="Moy M."/>
            <person name="Murphy B."/>
            <person name="Murphy L."/>
            <person name="Muzny D.M."/>
            <person name="Nelson D.L."/>
            <person name="Nelson D.R."/>
            <person name="Nelson K.A."/>
            <person name="Nixon K."/>
            <person name="Nusskern D.R."/>
            <person name="Pacleb J.M."/>
            <person name="Palazzolo M."/>
            <person name="Pittman G.S."/>
            <person name="Pan S."/>
            <person name="Pollard J."/>
            <person name="Puri V."/>
            <person name="Reese M.G."/>
            <person name="Reinert K."/>
            <person name="Remington K."/>
            <person name="Saunders R.D.C."/>
            <person name="Scheeler F."/>
            <person name="Shen H."/>
            <person name="Shue B.C."/>
            <person name="Siden-Kiamos I."/>
            <person name="Simpson M."/>
            <person name="Skupski M.P."/>
            <person name="Smith T.J."/>
            <person name="Spier E."/>
            <person name="Spradling A.C."/>
            <person name="Stapleton M."/>
            <person name="Strong R."/>
            <person name="Sun E."/>
            <person name="Svirskas R."/>
            <person name="Tector C."/>
            <person name="Turner R."/>
            <person name="Venter E."/>
            <person name="Wang A.H."/>
            <person name="Wang X."/>
            <person name="Wang Z.-Y."/>
            <person name="Wassarman D.A."/>
            <person name="Weinstock G.M."/>
            <person name="Weissenbach J."/>
            <person name="Williams S.M."/>
            <person name="Woodage T."/>
            <person name="Worley K.C."/>
            <person name="Wu D."/>
            <person name="Yang S."/>
            <person name="Yao Q.A."/>
            <person name="Ye J."/>
            <person name="Yeh R.-F."/>
            <person name="Zaveri J.S."/>
            <person name="Zhan M."/>
            <person name="Zhang G."/>
            <person name="Zhao Q."/>
            <person name="Zheng L."/>
            <person name="Zheng X.H."/>
            <person name="Zhong F.N."/>
            <person name="Zhong W."/>
            <person name="Zhou X."/>
            <person name="Zhu S.C."/>
            <person name="Zhu X."/>
            <person name="Smith H.O."/>
            <person name="Gibbs R.A."/>
            <person name="Myers E.W."/>
            <person name="Rubin G.M."/>
            <person name="Venter J.C."/>
        </authorList>
    </citation>
    <scope>NUCLEOTIDE SEQUENCE [LARGE SCALE GENOMIC DNA]</scope>
    <source>
        <strain evidence="14">Berkeley</strain>
    </source>
</reference>
<reference evidence="14" key="3">
    <citation type="journal article" date="2002" name="Genome Biol.">
        <title>Annotation of the Drosophila melanogaster euchromatic genome: a systematic review.</title>
        <authorList>
            <person name="Misra S."/>
            <person name="Crosby M.A."/>
            <person name="Mungall C.J."/>
            <person name="Matthews B.B."/>
            <person name="Campbell K.S."/>
            <person name="Hradecky P."/>
            <person name="Huang Y."/>
            <person name="Kaminker J.S."/>
            <person name="Millburn G.H."/>
            <person name="Prochnik S.E."/>
            <person name="Smith C.D."/>
            <person name="Tupy J.L."/>
            <person name="Whitfield E.J."/>
            <person name="Bayraktaroglu L."/>
            <person name="Berman B.P."/>
            <person name="Bettencourt B.R."/>
            <person name="Celniker S.E."/>
            <person name="de Grey A.D.N.J."/>
            <person name="Drysdale R.A."/>
            <person name="Harris N.L."/>
            <person name="Richter J."/>
            <person name="Russo S."/>
            <person name="Schroeder A.J."/>
            <person name="Shu S.Q."/>
            <person name="Stapleton M."/>
            <person name="Yamada C."/>
            <person name="Ashburner M."/>
            <person name="Gelbart W.M."/>
            <person name="Rubin G.M."/>
            <person name="Lewis S.E."/>
        </authorList>
    </citation>
    <scope>GENOME REANNOTATION</scope>
    <source>
        <strain evidence="14">Berkeley</strain>
    </source>
</reference>
<reference evidence="11" key="4">
    <citation type="journal article" date="2012" name="Front. Endocrinol.">
        <title>Isolation of the bioactive peptides CCHamide-1 and CCHamide-2 from Drosophila and their putative role in appetite regulation as ligands for G protein-coupled receptors.</title>
        <authorList>
            <person name="Ida T."/>
            <person name="Takahashi T."/>
            <person name="Tominaga H."/>
            <person name="Sato T."/>
            <person name="Sano H."/>
            <person name="Kume K."/>
            <person name="Ozaki M."/>
            <person name="Hiraguchi T."/>
            <person name="Shiotani H."/>
            <person name="Terajima S."/>
            <person name="Nakamura Y."/>
            <person name="Mori K."/>
            <person name="Yoshida M."/>
            <person name="Kato J."/>
            <person name="Murakami N."/>
            <person name="Miyazato M."/>
            <person name="Kangawa K."/>
            <person name="Kojima M."/>
        </authorList>
    </citation>
    <scope>FUNCTION</scope>
</reference>
<reference evidence="11" key="5">
    <citation type="journal article" date="2013" name="PLoS ONE">
        <title>Expression patterns of the Drosophila neuropeptide CCHamide-2 and its receptor may suggest hormonal signaling from the gut to the brain.</title>
        <authorList>
            <person name="Li S."/>
            <person name="Torre-Muruzabal T."/>
            <person name="Soegaard K.C."/>
            <person name="Ren G.R."/>
            <person name="Hauser F."/>
            <person name="Engelsen S.M."/>
            <person name="Poedenphanth M.D."/>
            <person name="Desjardins A."/>
            <person name="Grimmelikhuijzen C.J."/>
        </authorList>
    </citation>
    <scope>TISSUE SPECIFICITY</scope>
    <scope>DEVELOPMENTAL STAGE</scope>
    <source>
        <strain>Canton-S</strain>
    </source>
</reference>
<reference evidence="11" key="6">
    <citation type="journal article" date="2013" name="Sci. Rep.">
        <title>The CCHamide 1 receptor modulates sensory perception and olfactory behavior in starved Drosophila.</title>
        <authorList>
            <person name="Farhan A."/>
            <person name="Gulati J."/>
            <person name="Grobetae-Wilde E."/>
            <person name="Vogel H."/>
            <person name="Hansson B.S."/>
            <person name="Knaden M."/>
        </authorList>
    </citation>
    <scope>FUNCTION</scope>
</reference>
<reference key="7">
    <citation type="journal article" date="2018" name="Front. Physiol.">
        <title>The CCHamide1 Neuropeptide Expressed in the Anterior Dorsal Neuron 1 Conveys a Circadian Signal to the Ventral Lateral Neurons in Drosophila melanogaster.</title>
        <authorList>
            <person name="Fujiwara Y."/>
            <person name="Hermann-Luibl C."/>
            <person name="Katsura M."/>
            <person name="Sekiguchi M."/>
            <person name="Ida T."/>
            <person name="Helfrich-Foerster C."/>
            <person name="Yoshii T."/>
        </authorList>
    </citation>
    <scope>FUNCTION</scope>
    <scope>TISSUE SPECIFICITY</scope>
</reference>
<reference key="8">
    <citation type="journal article" date="2023" name="Cell">
        <title>A gut-secreted peptide suppresses arousability from sleep.</title>
        <authorList>
            <person name="Titos I."/>
            <person name="Juginovic A."/>
            <person name="Vaccaro A."/>
            <person name="Nambara K."/>
            <person name="Gorelik P."/>
            <person name="Mazor O."/>
            <person name="Rogulja D."/>
        </authorList>
    </citation>
    <scope>FUNCTION</scope>
    <scope>DISRUPTION PHENOTYPE</scope>
</reference>
<gene>
    <name evidence="13" type="primary">CCHa1-R</name>
    <name evidence="13" type="ORF">CG30106</name>
</gene>
<dbReference type="EMBL" id="AY842252">
    <property type="protein sequence ID" value="AAX58700.1"/>
    <property type="molecule type" value="mRNA"/>
</dbReference>
<dbReference type="EMBL" id="AE013599">
    <property type="protein sequence ID" value="AAF57819.3"/>
    <property type="molecule type" value="Genomic_DNA"/>
</dbReference>
<dbReference type="RefSeq" id="NP_611241.2">
    <property type="nucleotide sequence ID" value="NM_137397.3"/>
</dbReference>
<dbReference type="SMR" id="A1ZAX0"/>
<dbReference type="FunCoup" id="A1ZAX0">
    <property type="interactions" value="193"/>
</dbReference>
<dbReference type="STRING" id="7227.FBpp0086052"/>
<dbReference type="GlyCosmos" id="A1ZAX0">
    <property type="glycosylation" value="2 sites, No reported glycans"/>
</dbReference>
<dbReference type="GlyGen" id="A1ZAX0">
    <property type="glycosylation" value="2 sites"/>
</dbReference>
<dbReference type="PaxDb" id="7227-FBpp0086052"/>
<dbReference type="EnsemblMetazoa" id="FBtr0086893">
    <property type="protein sequence ID" value="FBpp0086052"/>
    <property type="gene ID" value="FBgn0050106"/>
</dbReference>
<dbReference type="GeneID" id="37004"/>
<dbReference type="KEGG" id="dme:Dmel_CG30106"/>
<dbReference type="UCSC" id="CG30106-RA">
    <property type="organism name" value="d. melanogaster"/>
</dbReference>
<dbReference type="AGR" id="FB:FBgn0050106"/>
<dbReference type="CTD" id="37004"/>
<dbReference type="FlyBase" id="FBgn0050106">
    <property type="gene designation" value="CCHa1-R"/>
</dbReference>
<dbReference type="VEuPathDB" id="VectorBase:FBgn0050106"/>
<dbReference type="eggNOG" id="KOG4219">
    <property type="taxonomic scope" value="Eukaryota"/>
</dbReference>
<dbReference type="GeneTree" id="ENSGT01120000271837"/>
<dbReference type="HOGENOM" id="CLU_009579_6_2_1"/>
<dbReference type="InParanoid" id="A1ZAX0"/>
<dbReference type="OMA" id="TNKGRTG"/>
<dbReference type="OrthoDB" id="10049706at2759"/>
<dbReference type="PhylomeDB" id="A1ZAX0"/>
<dbReference type="Reactome" id="R-DME-416476">
    <property type="pathway name" value="G alpha (q) signalling events"/>
</dbReference>
<dbReference type="BioGRID-ORCS" id="37004">
    <property type="hits" value="0 hits in 3 CRISPR screens"/>
</dbReference>
<dbReference type="GenomeRNAi" id="37004"/>
<dbReference type="PRO" id="PR:A1ZAX0"/>
<dbReference type="Proteomes" id="UP000000803">
    <property type="component" value="Chromosome 2R"/>
</dbReference>
<dbReference type="Bgee" id="FBgn0050106">
    <property type="expression patterns" value="Expressed in adult middle midgut class I enteroendocrine cell in adult midgut (Drosophila) and 28 other cell types or tissues"/>
</dbReference>
<dbReference type="GO" id="GO:0016020">
    <property type="term" value="C:membrane"/>
    <property type="evidence" value="ECO:0000314"/>
    <property type="project" value="FlyBase"/>
</dbReference>
<dbReference type="GO" id="GO:0005886">
    <property type="term" value="C:plasma membrane"/>
    <property type="evidence" value="ECO:0000314"/>
    <property type="project" value="FlyBase"/>
</dbReference>
<dbReference type="GO" id="GO:0008261">
    <property type="term" value="F:allatostatin receptor activity"/>
    <property type="evidence" value="ECO:0000314"/>
    <property type="project" value="FlyBase"/>
</dbReference>
<dbReference type="GO" id="GO:0008188">
    <property type="term" value="F:neuropeptide receptor activity"/>
    <property type="evidence" value="ECO:0000314"/>
    <property type="project" value="FlyBase"/>
</dbReference>
<dbReference type="GO" id="GO:0007186">
    <property type="term" value="P:G protein-coupled receptor signaling pathway"/>
    <property type="evidence" value="ECO:0000255"/>
    <property type="project" value="FlyBase"/>
</dbReference>
<dbReference type="GO" id="GO:0007218">
    <property type="term" value="P:neuropeptide signaling pathway"/>
    <property type="evidence" value="ECO:0000314"/>
    <property type="project" value="FlyBase"/>
</dbReference>
<dbReference type="CDD" id="cd15927">
    <property type="entry name" value="7tmA_Bombesin_R-like"/>
    <property type="match status" value="1"/>
</dbReference>
<dbReference type="FunFam" id="1.20.1070.10:FF:000286">
    <property type="entry name" value="Neuropeptide CCHamide-1 receptor"/>
    <property type="match status" value="1"/>
</dbReference>
<dbReference type="Gene3D" id="1.20.1070.10">
    <property type="entry name" value="Rhodopsin 7-helix transmembrane proteins"/>
    <property type="match status" value="1"/>
</dbReference>
<dbReference type="InterPro" id="IPR001556">
    <property type="entry name" value="Bombsn_rcpt-like"/>
</dbReference>
<dbReference type="InterPro" id="IPR000276">
    <property type="entry name" value="GPCR_Rhodpsn"/>
</dbReference>
<dbReference type="InterPro" id="IPR017452">
    <property type="entry name" value="GPCR_Rhodpsn_7TM"/>
</dbReference>
<dbReference type="PANTHER" id="PTHR45695">
    <property type="entry name" value="LEUCOKININ RECEPTOR-RELATED"/>
    <property type="match status" value="1"/>
</dbReference>
<dbReference type="PANTHER" id="PTHR45695:SF26">
    <property type="entry name" value="NEUROPEPTIDE CCHAMIDE-1 RECEPTOR"/>
    <property type="match status" value="1"/>
</dbReference>
<dbReference type="Pfam" id="PF00001">
    <property type="entry name" value="7tm_1"/>
    <property type="match status" value="1"/>
</dbReference>
<dbReference type="PRINTS" id="PR00358">
    <property type="entry name" value="BOMBESINR"/>
</dbReference>
<dbReference type="PRINTS" id="PR00237">
    <property type="entry name" value="GPCRRHODOPSN"/>
</dbReference>
<dbReference type="SUPFAM" id="SSF81321">
    <property type="entry name" value="Family A G protein-coupled receptor-like"/>
    <property type="match status" value="1"/>
</dbReference>
<dbReference type="PROSITE" id="PS50262">
    <property type="entry name" value="G_PROTEIN_RECEP_F1_2"/>
    <property type="match status" value="1"/>
</dbReference>